<organism>
    <name type="scientific">Pseudothermotoga lettingae (strain ATCC BAA-301 / DSM 14385 / NBRC 107922 / TMO)</name>
    <name type="common">Thermotoga lettingae</name>
    <dbReference type="NCBI Taxonomy" id="416591"/>
    <lineage>
        <taxon>Bacteria</taxon>
        <taxon>Thermotogati</taxon>
        <taxon>Thermotogota</taxon>
        <taxon>Thermotogae</taxon>
        <taxon>Thermotogales</taxon>
        <taxon>Thermotogaceae</taxon>
        <taxon>Pseudothermotoga</taxon>
    </lineage>
</organism>
<accession>A8F8M6</accession>
<comment type="function">
    <text evidence="1">The glycine cleavage system catalyzes the degradation of glycine. The P protein binds the alpha-amino group of glycine through its pyridoxal phosphate cofactor; CO(2) is released and the remaining methylamine moiety is then transferred to the lipoamide cofactor of the H protein.</text>
</comment>
<comment type="catalytic activity">
    <reaction evidence="1">
        <text>N(6)-[(R)-lipoyl]-L-lysyl-[glycine-cleavage complex H protein] + glycine + H(+) = N(6)-[(R)-S(8)-aminomethyldihydrolipoyl]-L-lysyl-[glycine-cleavage complex H protein] + CO2</text>
        <dbReference type="Rhea" id="RHEA:24304"/>
        <dbReference type="Rhea" id="RHEA-COMP:10494"/>
        <dbReference type="Rhea" id="RHEA-COMP:10495"/>
        <dbReference type="ChEBI" id="CHEBI:15378"/>
        <dbReference type="ChEBI" id="CHEBI:16526"/>
        <dbReference type="ChEBI" id="CHEBI:57305"/>
        <dbReference type="ChEBI" id="CHEBI:83099"/>
        <dbReference type="ChEBI" id="CHEBI:83143"/>
        <dbReference type="EC" id="1.4.4.2"/>
    </reaction>
</comment>
<comment type="cofactor">
    <cofactor evidence="1">
        <name>pyridoxal 5'-phosphate</name>
        <dbReference type="ChEBI" id="CHEBI:597326"/>
    </cofactor>
</comment>
<comment type="subunit">
    <text evidence="1">The glycine cleavage system is composed of four proteins: P, T, L and H. In this organism, the P 'protein' is a heterodimer of two subunits.</text>
</comment>
<comment type="similarity">
    <text evidence="1">Belongs to the GcvP family. C-terminal subunit subfamily.</text>
</comment>
<name>GCSPB_PSELT</name>
<dbReference type="EC" id="1.4.4.2" evidence="1"/>
<dbReference type="EMBL" id="CP000812">
    <property type="protein sequence ID" value="ABV34510.1"/>
    <property type="molecule type" value="Genomic_DNA"/>
</dbReference>
<dbReference type="RefSeq" id="WP_012003986.1">
    <property type="nucleotide sequence ID" value="NZ_BSDV01000001.1"/>
</dbReference>
<dbReference type="SMR" id="A8F8M6"/>
<dbReference type="STRING" id="416591.Tlet_1956"/>
<dbReference type="KEGG" id="tle:Tlet_1956"/>
<dbReference type="eggNOG" id="COG1003">
    <property type="taxonomic scope" value="Bacteria"/>
</dbReference>
<dbReference type="HOGENOM" id="CLU_004620_5_0_0"/>
<dbReference type="OrthoDB" id="9801272at2"/>
<dbReference type="Proteomes" id="UP000002016">
    <property type="component" value="Chromosome"/>
</dbReference>
<dbReference type="GO" id="GO:0005829">
    <property type="term" value="C:cytosol"/>
    <property type="evidence" value="ECO:0007669"/>
    <property type="project" value="TreeGrafter"/>
</dbReference>
<dbReference type="GO" id="GO:0005960">
    <property type="term" value="C:glycine cleavage complex"/>
    <property type="evidence" value="ECO:0007669"/>
    <property type="project" value="TreeGrafter"/>
</dbReference>
<dbReference type="GO" id="GO:0016594">
    <property type="term" value="F:glycine binding"/>
    <property type="evidence" value="ECO:0007669"/>
    <property type="project" value="TreeGrafter"/>
</dbReference>
<dbReference type="GO" id="GO:0004375">
    <property type="term" value="F:glycine dehydrogenase (decarboxylating) activity"/>
    <property type="evidence" value="ECO:0007669"/>
    <property type="project" value="UniProtKB-EC"/>
</dbReference>
<dbReference type="GO" id="GO:0030170">
    <property type="term" value="F:pyridoxal phosphate binding"/>
    <property type="evidence" value="ECO:0007669"/>
    <property type="project" value="TreeGrafter"/>
</dbReference>
<dbReference type="GO" id="GO:0019464">
    <property type="term" value="P:glycine decarboxylation via glycine cleavage system"/>
    <property type="evidence" value="ECO:0007669"/>
    <property type="project" value="UniProtKB-UniRule"/>
</dbReference>
<dbReference type="CDD" id="cd00613">
    <property type="entry name" value="GDC-P"/>
    <property type="match status" value="1"/>
</dbReference>
<dbReference type="FunFam" id="3.40.640.10:FF:000034">
    <property type="entry name" value="Probable glycine dehydrogenase (decarboxylating) subunit 2"/>
    <property type="match status" value="1"/>
</dbReference>
<dbReference type="FunFam" id="3.90.1150.10:FF:000014">
    <property type="entry name" value="Probable glycine dehydrogenase (decarboxylating) subunit 2"/>
    <property type="match status" value="1"/>
</dbReference>
<dbReference type="Gene3D" id="6.20.440.10">
    <property type="match status" value="1"/>
</dbReference>
<dbReference type="Gene3D" id="3.90.1150.10">
    <property type="entry name" value="Aspartate Aminotransferase, domain 1"/>
    <property type="match status" value="1"/>
</dbReference>
<dbReference type="Gene3D" id="3.40.640.10">
    <property type="entry name" value="Type I PLP-dependent aspartate aminotransferase-like (Major domain)"/>
    <property type="match status" value="1"/>
</dbReference>
<dbReference type="HAMAP" id="MF_00713">
    <property type="entry name" value="GcvPB"/>
    <property type="match status" value="1"/>
</dbReference>
<dbReference type="InterPro" id="IPR023012">
    <property type="entry name" value="GcvPB"/>
</dbReference>
<dbReference type="InterPro" id="IPR049316">
    <property type="entry name" value="GDC-P_C"/>
</dbReference>
<dbReference type="InterPro" id="IPR049315">
    <property type="entry name" value="GDC-P_N"/>
</dbReference>
<dbReference type="InterPro" id="IPR020581">
    <property type="entry name" value="GDC_P"/>
</dbReference>
<dbReference type="InterPro" id="IPR015424">
    <property type="entry name" value="PyrdxlP-dep_Trfase"/>
</dbReference>
<dbReference type="InterPro" id="IPR015421">
    <property type="entry name" value="PyrdxlP-dep_Trfase_major"/>
</dbReference>
<dbReference type="InterPro" id="IPR015422">
    <property type="entry name" value="PyrdxlP-dep_Trfase_small"/>
</dbReference>
<dbReference type="NCBIfam" id="NF003346">
    <property type="entry name" value="PRK04366.1"/>
    <property type="match status" value="1"/>
</dbReference>
<dbReference type="PANTHER" id="PTHR11773:SF1">
    <property type="entry name" value="GLYCINE DEHYDROGENASE (DECARBOXYLATING), MITOCHONDRIAL"/>
    <property type="match status" value="1"/>
</dbReference>
<dbReference type="PANTHER" id="PTHR11773">
    <property type="entry name" value="GLYCINE DEHYDROGENASE, DECARBOXYLATING"/>
    <property type="match status" value="1"/>
</dbReference>
<dbReference type="Pfam" id="PF21478">
    <property type="entry name" value="GcvP2_C"/>
    <property type="match status" value="1"/>
</dbReference>
<dbReference type="Pfam" id="PF02347">
    <property type="entry name" value="GDC-P"/>
    <property type="match status" value="1"/>
</dbReference>
<dbReference type="SUPFAM" id="SSF53383">
    <property type="entry name" value="PLP-dependent transferases"/>
    <property type="match status" value="1"/>
</dbReference>
<proteinExistence type="inferred from homology"/>
<keyword id="KW-0560">Oxidoreductase</keyword>
<keyword id="KW-0663">Pyridoxal phosphate</keyword>
<keyword id="KW-1185">Reference proteome</keyword>
<evidence type="ECO:0000255" key="1">
    <source>
        <dbReference type="HAMAP-Rule" id="MF_00713"/>
    </source>
</evidence>
<reference key="1">
    <citation type="submission" date="2007-08" db="EMBL/GenBank/DDBJ databases">
        <title>Complete sequence of Thermotoga lettingae TMO.</title>
        <authorList>
            <consortium name="US DOE Joint Genome Institute"/>
            <person name="Copeland A."/>
            <person name="Lucas S."/>
            <person name="Lapidus A."/>
            <person name="Barry K."/>
            <person name="Glavina del Rio T."/>
            <person name="Dalin E."/>
            <person name="Tice H."/>
            <person name="Pitluck S."/>
            <person name="Foster B."/>
            <person name="Bruce D."/>
            <person name="Schmutz J."/>
            <person name="Larimer F."/>
            <person name="Land M."/>
            <person name="Hauser L."/>
            <person name="Kyrpides N."/>
            <person name="Mikhailova N."/>
            <person name="Nelson K."/>
            <person name="Gogarten J.P."/>
            <person name="Noll K."/>
            <person name="Richardson P."/>
        </authorList>
    </citation>
    <scope>NUCLEOTIDE SEQUENCE [LARGE SCALE GENOMIC DNA]</scope>
    <source>
        <strain>ATCC BAA-301 / DSM 14385 / NBRC 107922 / TMO</strain>
    </source>
</reference>
<sequence length="479" mass="53612">MIIFEKSVPGRKAYRLPDEELQRIDPVFPEHLKRTRPLRLPELSEPDVVRHYTALAEKNYSVDKGFYPLGSCTMKYNPKLNEYVAGLEGFTDIHPYQPWESVQGALQVMYELKEFLCEITGMDEMTLQPAAGAHGELTGMLIVRAYHLSRNDKKRHVALVPDSAHGTNPASAAMAGFDVVEIKSTEDGLVDLEQLENHLNDEIAVLMLTNPNTLGLFEKDIVKIAEKVHQAGALLYYDGANLNAIMGKIKPGEMGFDIVHLNLHKTFSAPHGMGGPGSGPVGVKAFLSEFLPIPIIRKDGDKYYPDFKLPNSIGRTRSFYGNFLVLLKAYVYILSMGKDGLTRASEMAVLNANYLRSLISKFLKIASPGICMHEFVVDGSQFVKETGVKILDVAKRILDYGLHAPTVYFPLIVHEDMMIEPTETENKNTLDYFAKVLEKIVEEAKKTPEVVKTAPHTTPVKRLDDITATKKPVYRYRLS</sequence>
<gene>
    <name evidence="1" type="primary">gcvPB</name>
    <name type="ordered locus">Tlet_1956</name>
</gene>
<feature type="chain" id="PRO_1000062081" description="Probable glycine dehydrogenase (decarboxylating) subunit 2">
    <location>
        <begin position="1"/>
        <end position="479"/>
    </location>
</feature>
<feature type="modified residue" description="N6-(pyridoxal phosphate)lysine" evidence="1">
    <location>
        <position position="265"/>
    </location>
</feature>
<protein>
    <recommendedName>
        <fullName evidence="1">Probable glycine dehydrogenase (decarboxylating) subunit 2</fullName>
        <ecNumber evidence="1">1.4.4.2</ecNumber>
    </recommendedName>
    <alternativeName>
        <fullName evidence="1">Glycine cleavage system P-protein subunit 2</fullName>
    </alternativeName>
    <alternativeName>
        <fullName evidence="1">Glycine decarboxylase subunit 2</fullName>
    </alternativeName>
    <alternativeName>
        <fullName evidence="1">Glycine dehydrogenase (aminomethyl-transferring) subunit 2</fullName>
    </alternativeName>
</protein>